<gene>
    <name evidence="7 10" type="primary">Gstm4</name>
    <name evidence="8" type="synonym">Gstm7</name>
    <name evidence="8" type="synonym">Gstm7-7</name>
</gene>
<accession>Q8R5I6</accession>
<sequence length="218" mass="25519">MPMTLGYWDIRGLAHAIRLLLEYTGSSYEEKRYTMGDAPDYDRSQWLSEKFKLGLDFPNLPYLIDGSHKITQSNAILRYIARKHNLCGETEEEKIRVDILENQAMDVSNQLARVCYSPDFEKLKVEYLEQLPGMVKLFSQFLGQRTWFVGEKITFVDFLAYDILDLHLIFEPTCLDAFPNLKDFVARFEVLKRISAYMKTSRFLRTPLYTKVATWGNK</sequence>
<reference key="1">
    <citation type="journal article" date="2002" name="Biochem. J.">
        <title>Loss of the Nrf2 transcription factor causes a marked reduction in constitutive and inducible expression of the glutathione S-transferase Gsta1, Gsta2, Gstm1, Gstm2, Gstm3 and Gstm4 genes in the livers of male and female mice.</title>
        <authorList>
            <person name="Chanas S.A."/>
            <person name="Jiang Q."/>
            <person name="McMahon M."/>
            <person name="McWalter G.K."/>
            <person name="McLellan L.I."/>
            <person name="Elcombe C.R."/>
            <person name="Henderson C.J."/>
            <person name="Wolf C.R."/>
            <person name="Moffat G.J."/>
            <person name="Itoh K."/>
            <person name="Yamamoto M."/>
            <person name="Hayes J.D."/>
        </authorList>
    </citation>
    <scope>NUCLEOTIDE SEQUENCE [MRNA]</scope>
</reference>
<reference key="2">
    <citation type="journal article" date="2002" name="Biochem. J.">
        <title>Cloning and expression of a novel Mu class murine glutathione transferase isoenzyme.</title>
        <authorList>
            <person name="Guo J."/>
            <person name="Zimniak L."/>
            <person name="Zimniak P."/>
            <person name="Orchard J.L."/>
            <person name="Singh S.V."/>
        </authorList>
    </citation>
    <scope>NUCLEOTIDE SEQUENCE [MRNA]</scope>
    <scope>TISSUE SPECIFICITY</scope>
    <scope>SUBUNIT</scope>
    <scope>CATALYTIC ACTIVITY</scope>
    <source>
        <strain>A/J</strain>
    </source>
</reference>
<reference key="3">
    <citation type="journal article" date="2009" name="PLoS Biol.">
        <title>Lineage-specific biology revealed by a finished genome assembly of the mouse.</title>
        <authorList>
            <person name="Church D.M."/>
            <person name="Goodstadt L."/>
            <person name="Hillier L.W."/>
            <person name="Zody M.C."/>
            <person name="Goldstein S."/>
            <person name="She X."/>
            <person name="Bult C.J."/>
            <person name="Agarwala R."/>
            <person name="Cherry J.L."/>
            <person name="DiCuccio M."/>
            <person name="Hlavina W."/>
            <person name="Kapustin Y."/>
            <person name="Meric P."/>
            <person name="Maglott D."/>
            <person name="Birtle Z."/>
            <person name="Marques A.C."/>
            <person name="Graves T."/>
            <person name="Zhou S."/>
            <person name="Teague B."/>
            <person name="Potamousis K."/>
            <person name="Churas C."/>
            <person name="Place M."/>
            <person name="Herschleb J."/>
            <person name="Runnheim R."/>
            <person name="Forrest D."/>
            <person name="Amos-Landgraf J."/>
            <person name="Schwartz D.C."/>
            <person name="Cheng Z."/>
            <person name="Lindblad-Toh K."/>
            <person name="Eichler E.E."/>
            <person name="Ponting C.P."/>
        </authorList>
    </citation>
    <scope>NUCLEOTIDE SEQUENCE [LARGE SCALE GENOMIC DNA]</scope>
    <source>
        <strain>C57BL/6J</strain>
    </source>
</reference>
<reference key="4">
    <citation type="journal article" date="2004" name="Genome Res.">
        <title>The status, quality, and expansion of the NIH full-length cDNA project: the Mammalian Gene Collection (MGC).</title>
        <authorList>
            <consortium name="The MGC Project Team"/>
        </authorList>
    </citation>
    <scope>NUCLEOTIDE SEQUENCE [LARGE SCALE MRNA]</scope>
    <source>
        <strain>FVB/N-3</strain>
    </source>
</reference>
<reference evidence="11" key="5">
    <citation type="journal article" date="2010" name="Cell">
        <title>A tissue-specific atlas of mouse protein phosphorylation and expression.</title>
        <authorList>
            <person name="Huttlin E.L."/>
            <person name="Jedrychowski M.P."/>
            <person name="Elias J.E."/>
            <person name="Goswami T."/>
            <person name="Rad R."/>
            <person name="Beausoleil S.A."/>
            <person name="Villen J."/>
            <person name="Haas W."/>
            <person name="Sowa M.E."/>
            <person name="Gygi S.P."/>
        </authorList>
    </citation>
    <scope>IDENTIFICATION BY MASS SPECTROMETRY [LARGE SCALE ANALYSIS]</scope>
</reference>
<dbReference type="EC" id="2.5.1.18" evidence="6"/>
<dbReference type="EC" id="4.4.1.20" evidence="3"/>
<dbReference type="EMBL" id="AF501320">
    <property type="protein sequence ID" value="AAM67419.1"/>
    <property type="molecule type" value="mRNA"/>
</dbReference>
<dbReference type="EMBL" id="AF464943">
    <property type="protein sequence ID" value="AAL76248.1"/>
    <property type="molecule type" value="mRNA"/>
</dbReference>
<dbReference type="EMBL" id="AL671877">
    <property type="status" value="NOT_ANNOTATED_CDS"/>
    <property type="molecule type" value="Genomic_DNA"/>
</dbReference>
<dbReference type="EMBL" id="BC030444">
    <property type="protein sequence ID" value="AAH30444.1"/>
    <property type="molecule type" value="mRNA"/>
</dbReference>
<dbReference type="CCDS" id="CCDS17748.1"/>
<dbReference type="RefSeq" id="NP_081040.1">
    <property type="nucleotide sequence ID" value="NM_026764.4"/>
</dbReference>
<dbReference type="SMR" id="Q8R5I6"/>
<dbReference type="FunCoup" id="Q8R5I6">
    <property type="interactions" value="231"/>
</dbReference>
<dbReference type="STRING" id="10090.ENSMUSP00000029489"/>
<dbReference type="iPTMnet" id="Q8R5I6"/>
<dbReference type="PhosphoSitePlus" id="Q8R5I6"/>
<dbReference type="SwissPalm" id="Q8R5I6"/>
<dbReference type="jPOST" id="Q8R5I6"/>
<dbReference type="PaxDb" id="10090-ENSMUSP00000029489"/>
<dbReference type="PeptideAtlas" id="Q8R5I6"/>
<dbReference type="ProteomicsDB" id="338791"/>
<dbReference type="Pumba" id="Q8R5I6"/>
<dbReference type="Antibodypedia" id="33768">
    <property type="antibodies" value="168 antibodies from 27 providers"/>
</dbReference>
<dbReference type="DNASU" id="14865"/>
<dbReference type="Ensembl" id="ENSMUST00000029489.15">
    <property type="protein sequence ID" value="ENSMUSP00000029489.9"/>
    <property type="gene ID" value="ENSMUSG00000027890.18"/>
</dbReference>
<dbReference type="GeneID" id="14865"/>
<dbReference type="KEGG" id="mmu:14865"/>
<dbReference type="UCSC" id="uc008qxy.2">
    <property type="organism name" value="mouse"/>
</dbReference>
<dbReference type="AGR" id="MGI:95862"/>
<dbReference type="CTD" id="2948"/>
<dbReference type="MGI" id="MGI:95862">
    <property type="gene designation" value="Gstm4"/>
</dbReference>
<dbReference type="VEuPathDB" id="HostDB:ENSMUSG00000027890"/>
<dbReference type="eggNOG" id="KOG1695">
    <property type="taxonomic scope" value="Eukaryota"/>
</dbReference>
<dbReference type="GeneTree" id="ENSGT00940000154679"/>
<dbReference type="HOGENOM" id="CLU_039475_2_0_1"/>
<dbReference type="InParanoid" id="Q8R5I6"/>
<dbReference type="OMA" id="MAPTFAY"/>
<dbReference type="OrthoDB" id="4951845at2759"/>
<dbReference type="PhylomeDB" id="Q8R5I6"/>
<dbReference type="TreeFam" id="TF353040"/>
<dbReference type="Reactome" id="R-MMU-156590">
    <property type="pathway name" value="Glutathione conjugation"/>
</dbReference>
<dbReference type="Reactome" id="R-MMU-9026762">
    <property type="pathway name" value="Biosynthesis of maresin conjugates in tissue regeneration (MCTR)"/>
</dbReference>
<dbReference type="BioGRID-ORCS" id="14865">
    <property type="hits" value="2 hits in 77 CRISPR screens"/>
</dbReference>
<dbReference type="PRO" id="PR:Q8R5I6"/>
<dbReference type="Proteomes" id="UP000000589">
    <property type="component" value="Chromosome 3"/>
</dbReference>
<dbReference type="RNAct" id="Q8R5I6">
    <property type="molecule type" value="protein"/>
</dbReference>
<dbReference type="Bgee" id="ENSMUSG00000027890">
    <property type="expression patterns" value="Expressed in urinary bladder urothelium and 198 other cell types or tissues"/>
</dbReference>
<dbReference type="ExpressionAtlas" id="Q8R5I6">
    <property type="expression patterns" value="baseline and differential"/>
</dbReference>
<dbReference type="GO" id="GO:0005829">
    <property type="term" value="C:cytosol"/>
    <property type="evidence" value="ECO:0000304"/>
    <property type="project" value="MGI"/>
</dbReference>
<dbReference type="GO" id="GO:0019899">
    <property type="term" value="F:enzyme binding"/>
    <property type="evidence" value="ECO:0007669"/>
    <property type="project" value="Ensembl"/>
</dbReference>
<dbReference type="GO" id="GO:0043295">
    <property type="term" value="F:glutathione binding"/>
    <property type="evidence" value="ECO:0007669"/>
    <property type="project" value="Ensembl"/>
</dbReference>
<dbReference type="GO" id="GO:0004364">
    <property type="term" value="F:glutathione transferase activity"/>
    <property type="evidence" value="ECO:0000314"/>
    <property type="project" value="MGI"/>
</dbReference>
<dbReference type="GO" id="GO:0004464">
    <property type="term" value="F:leukotriene-C4 synthase activity"/>
    <property type="evidence" value="ECO:0000250"/>
    <property type="project" value="UniProtKB"/>
</dbReference>
<dbReference type="GO" id="GO:0042803">
    <property type="term" value="F:protein homodimerization activity"/>
    <property type="evidence" value="ECO:0007669"/>
    <property type="project" value="Ensembl"/>
</dbReference>
<dbReference type="GO" id="GO:0006749">
    <property type="term" value="P:glutathione metabolic process"/>
    <property type="evidence" value="ECO:0007669"/>
    <property type="project" value="Ensembl"/>
</dbReference>
<dbReference type="GO" id="GO:0042759">
    <property type="term" value="P:long-chain fatty acid biosynthetic process"/>
    <property type="evidence" value="ECO:0000250"/>
    <property type="project" value="UniProtKB"/>
</dbReference>
<dbReference type="GO" id="GO:0018916">
    <property type="term" value="P:nitrobenzene metabolic process"/>
    <property type="evidence" value="ECO:0000314"/>
    <property type="project" value="MGI"/>
</dbReference>
<dbReference type="GO" id="GO:0042178">
    <property type="term" value="P:xenobiotic catabolic process"/>
    <property type="evidence" value="ECO:0000314"/>
    <property type="project" value="MGI"/>
</dbReference>
<dbReference type="CDD" id="cd03209">
    <property type="entry name" value="GST_C_Mu"/>
    <property type="match status" value="1"/>
</dbReference>
<dbReference type="CDD" id="cd03075">
    <property type="entry name" value="GST_N_Mu"/>
    <property type="match status" value="1"/>
</dbReference>
<dbReference type="FunFam" id="3.40.30.10:FF:000603">
    <property type="entry name" value="Glutathione S-transferase Mu 1"/>
    <property type="match status" value="1"/>
</dbReference>
<dbReference type="FunFam" id="1.20.1050.10:FF:000101">
    <property type="entry name" value="Glutathione S-transferase Mu 4"/>
    <property type="match status" value="1"/>
</dbReference>
<dbReference type="Gene3D" id="1.20.1050.10">
    <property type="match status" value="1"/>
</dbReference>
<dbReference type="Gene3D" id="3.40.30.10">
    <property type="entry name" value="Glutaredoxin"/>
    <property type="match status" value="1"/>
</dbReference>
<dbReference type="InterPro" id="IPR010987">
    <property type="entry name" value="Glutathione-S-Trfase_C-like"/>
</dbReference>
<dbReference type="InterPro" id="IPR036282">
    <property type="entry name" value="Glutathione-S-Trfase_C_sf"/>
</dbReference>
<dbReference type="InterPro" id="IPR004045">
    <property type="entry name" value="Glutathione_S-Trfase_N"/>
</dbReference>
<dbReference type="InterPro" id="IPR004046">
    <property type="entry name" value="GST_C"/>
</dbReference>
<dbReference type="InterPro" id="IPR003081">
    <property type="entry name" value="GST_mu"/>
</dbReference>
<dbReference type="InterPro" id="IPR050213">
    <property type="entry name" value="GST_superfamily"/>
</dbReference>
<dbReference type="InterPro" id="IPR036249">
    <property type="entry name" value="Thioredoxin-like_sf"/>
</dbReference>
<dbReference type="PANTHER" id="PTHR11571">
    <property type="entry name" value="GLUTATHIONE S-TRANSFERASE"/>
    <property type="match status" value="1"/>
</dbReference>
<dbReference type="PANTHER" id="PTHR11571:SF137">
    <property type="entry name" value="GLUTATHIONE S-TRANSFERASE MU 4"/>
    <property type="match status" value="1"/>
</dbReference>
<dbReference type="Pfam" id="PF00043">
    <property type="entry name" value="GST_C"/>
    <property type="match status" value="1"/>
</dbReference>
<dbReference type="Pfam" id="PF02798">
    <property type="entry name" value="GST_N"/>
    <property type="match status" value="1"/>
</dbReference>
<dbReference type="PRINTS" id="PR01267">
    <property type="entry name" value="GSTRNSFRASEM"/>
</dbReference>
<dbReference type="SFLD" id="SFLDG01205">
    <property type="entry name" value="AMPS.1"/>
    <property type="match status" value="1"/>
</dbReference>
<dbReference type="SFLD" id="SFLDG00363">
    <property type="entry name" value="AMPS_(cytGST):_Alpha-__Mu-__Pi"/>
    <property type="match status" value="1"/>
</dbReference>
<dbReference type="SUPFAM" id="SSF47616">
    <property type="entry name" value="GST C-terminal domain-like"/>
    <property type="match status" value="1"/>
</dbReference>
<dbReference type="SUPFAM" id="SSF52833">
    <property type="entry name" value="Thioredoxin-like"/>
    <property type="match status" value="1"/>
</dbReference>
<dbReference type="PROSITE" id="PS50405">
    <property type="entry name" value="GST_CTER"/>
    <property type="match status" value="1"/>
</dbReference>
<dbReference type="PROSITE" id="PS50404">
    <property type="entry name" value="GST_NTER"/>
    <property type="match status" value="1"/>
</dbReference>
<name>GSTM4_MOUSE</name>
<proteinExistence type="evidence at protein level"/>
<keyword id="KW-0963">Cytoplasm</keyword>
<keyword id="KW-0443">Lipid metabolism</keyword>
<keyword id="KW-0456">Lyase</keyword>
<keyword id="KW-1185">Reference proteome</keyword>
<keyword id="KW-0808">Transferase</keyword>
<comment type="function">
    <text evidence="3">Conjugation of reduced glutathione to a wide number of exogenous and endogenous hydrophobic electrophiles. Catalyzes the conjugation of leukotriene A4 with reduced glutathione (GSH) to form leukotriene C4. Can also catalyze the transfer of a glutathionyl group from glutathione (GSH) to 13(S),14(S)-epoxy-docosahexaenoic acid to form maresin conjugate in tissue regeneration 1 (MCTR1), a bioactive lipid mediator that possess potent anti-inflammatory and proresolving actions.</text>
</comment>
<comment type="catalytic activity">
    <reaction evidence="6">
        <text>RX + glutathione = an S-substituted glutathione + a halide anion + H(+)</text>
        <dbReference type="Rhea" id="RHEA:16437"/>
        <dbReference type="ChEBI" id="CHEBI:15378"/>
        <dbReference type="ChEBI" id="CHEBI:16042"/>
        <dbReference type="ChEBI" id="CHEBI:17792"/>
        <dbReference type="ChEBI" id="CHEBI:57925"/>
        <dbReference type="ChEBI" id="CHEBI:90779"/>
        <dbReference type="EC" id="2.5.1.18"/>
    </reaction>
</comment>
<comment type="catalytic activity">
    <reaction evidence="6">
        <text>1-chloro-2,4-dinitrobenzene + glutathione = 2,4-dinitrophenyl-S-glutathione + chloride + H(+)</text>
        <dbReference type="Rhea" id="RHEA:51220"/>
        <dbReference type="ChEBI" id="CHEBI:15378"/>
        <dbReference type="ChEBI" id="CHEBI:17996"/>
        <dbReference type="ChEBI" id="CHEBI:34718"/>
        <dbReference type="ChEBI" id="CHEBI:57925"/>
        <dbReference type="ChEBI" id="CHEBI:133977"/>
        <dbReference type="EC" id="2.5.1.18"/>
    </reaction>
</comment>
<comment type="catalytic activity">
    <reaction evidence="3">
        <text>(13S,14S)-epoxy-(4Z,7Z,9E,11E,16Z,19Z)-docosahexaenoate + glutathione = (13R)-S-glutathionyl-(14S)-hydroxy-(4Z,7Z,9E,11E,16Z,19Z)-docosahexaenoate</text>
        <dbReference type="Rhea" id="RHEA:53508"/>
        <dbReference type="ChEBI" id="CHEBI:57925"/>
        <dbReference type="ChEBI" id="CHEBI:131958"/>
        <dbReference type="ChEBI" id="CHEBI:137407"/>
    </reaction>
</comment>
<comment type="catalytic activity">
    <reaction evidence="3">
        <text>leukotriene C4 = leukotriene A4 + glutathione</text>
        <dbReference type="Rhea" id="RHEA:17617"/>
        <dbReference type="ChEBI" id="CHEBI:57463"/>
        <dbReference type="ChEBI" id="CHEBI:57925"/>
        <dbReference type="ChEBI" id="CHEBI:57973"/>
        <dbReference type="EC" id="4.4.1.20"/>
    </reaction>
</comment>
<comment type="subunit">
    <text evidence="6">Homodimer.</text>
</comment>
<comment type="subcellular location">
    <subcellularLocation>
        <location evidence="3">Cytoplasm</location>
    </subcellularLocation>
</comment>
<comment type="tissue specificity">
    <text evidence="6">Widely expressed.</text>
</comment>
<comment type="similarity">
    <text evidence="9">Belongs to the GST superfamily. Mu family.</text>
</comment>
<organism>
    <name type="scientific">Mus musculus</name>
    <name type="common">Mouse</name>
    <dbReference type="NCBI Taxonomy" id="10090"/>
    <lineage>
        <taxon>Eukaryota</taxon>
        <taxon>Metazoa</taxon>
        <taxon>Chordata</taxon>
        <taxon>Craniata</taxon>
        <taxon>Vertebrata</taxon>
        <taxon>Euteleostomi</taxon>
        <taxon>Mammalia</taxon>
        <taxon>Eutheria</taxon>
        <taxon>Euarchontoglires</taxon>
        <taxon>Glires</taxon>
        <taxon>Rodentia</taxon>
        <taxon>Myomorpha</taxon>
        <taxon>Muroidea</taxon>
        <taxon>Muridae</taxon>
        <taxon>Murinae</taxon>
        <taxon>Mus</taxon>
        <taxon>Mus</taxon>
    </lineage>
</organism>
<protein>
    <recommendedName>
        <fullName>Glutathione S-transferase Mu 4</fullName>
        <ecNumber evidence="6">2.5.1.18</ecNumber>
    </recommendedName>
    <alternativeName>
        <fullName>GST class-mu 4</fullName>
    </alternativeName>
    <alternativeName>
        <fullName>GSTM4-4</fullName>
    </alternativeName>
    <alternativeName>
        <fullName evidence="8">Glutathione transferase GSTM7-7</fullName>
    </alternativeName>
    <alternativeName>
        <fullName>Leukotriene C4 synthase GSTM4</fullName>
        <ecNumber evidence="3">4.4.1.20</ecNumber>
    </alternativeName>
</protein>
<feature type="chain" id="PRO_0000449827" description="Glutathione S-transferase Mu 4">
    <location>
        <begin position="1"/>
        <end position="218"/>
    </location>
</feature>
<feature type="domain" description="GST N-terminal" evidence="4">
    <location>
        <begin position="1"/>
        <end position="88"/>
    </location>
</feature>
<feature type="domain" description="GST C-terminal" evidence="5">
    <location>
        <begin position="90"/>
        <end position="208"/>
    </location>
</feature>
<feature type="binding site" evidence="2">
    <location>
        <begin position="7"/>
        <end position="8"/>
    </location>
    <ligand>
        <name>glutathione</name>
        <dbReference type="ChEBI" id="CHEBI:57925"/>
    </ligand>
</feature>
<feature type="binding site" evidence="2">
    <location>
        <begin position="46"/>
        <end position="50"/>
    </location>
    <ligand>
        <name>glutathione</name>
        <dbReference type="ChEBI" id="CHEBI:57925"/>
    </ligand>
</feature>
<feature type="binding site" evidence="2">
    <location>
        <begin position="59"/>
        <end position="60"/>
    </location>
    <ligand>
        <name>glutathione</name>
        <dbReference type="ChEBI" id="CHEBI:57925"/>
    </ligand>
</feature>
<feature type="binding site" evidence="2">
    <location>
        <begin position="72"/>
        <end position="73"/>
    </location>
    <ligand>
        <name>glutathione</name>
        <dbReference type="ChEBI" id="CHEBI:57925"/>
    </ligand>
</feature>
<feature type="binding site" evidence="1">
    <location>
        <position position="116"/>
    </location>
    <ligand>
        <name>substrate</name>
    </ligand>
</feature>
<evidence type="ECO:0000250" key="1"/>
<evidence type="ECO:0000250" key="2">
    <source>
        <dbReference type="UniProtKB" id="P08515"/>
    </source>
</evidence>
<evidence type="ECO:0000250" key="3">
    <source>
        <dbReference type="UniProtKB" id="Q03013"/>
    </source>
</evidence>
<evidence type="ECO:0000255" key="4">
    <source>
        <dbReference type="PROSITE-ProRule" id="PRU00684"/>
    </source>
</evidence>
<evidence type="ECO:0000255" key="5">
    <source>
        <dbReference type="PROSITE-ProRule" id="PRU00685"/>
    </source>
</evidence>
<evidence type="ECO:0000269" key="6">
    <source>
    </source>
</evidence>
<evidence type="ECO:0000303" key="7">
    <source>
    </source>
</evidence>
<evidence type="ECO:0000303" key="8">
    <source>
    </source>
</evidence>
<evidence type="ECO:0000305" key="9"/>
<evidence type="ECO:0000312" key="10">
    <source>
        <dbReference type="MGI" id="MGI:95862"/>
    </source>
</evidence>
<evidence type="ECO:0007744" key="11">
    <source>
    </source>
</evidence>